<dbReference type="EMBL" id="U20824">
    <property type="protein sequence ID" value="AAC13864.1"/>
    <property type="molecule type" value="Genomic_DNA"/>
</dbReference>
<dbReference type="PIR" id="S55670">
    <property type="entry name" value="S55670"/>
</dbReference>
<dbReference type="RefSeq" id="NP_042673.1">
    <property type="nucleotide sequence ID" value="NC_001650.2"/>
</dbReference>
<dbReference type="SMR" id="Q66676"/>
<dbReference type="GeneID" id="1461014"/>
<dbReference type="KEGG" id="vg:1461014"/>
<dbReference type="Proteomes" id="UP000007083">
    <property type="component" value="Segment"/>
</dbReference>
<dbReference type="GO" id="GO:0033644">
    <property type="term" value="C:host cell membrane"/>
    <property type="evidence" value="ECO:0007669"/>
    <property type="project" value="UniProtKB-SubCell"/>
</dbReference>
<dbReference type="GO" id="GO:0016020">
    <property type="term" value="C:membrane"/>
    <property type="evidence" value="ECO:0007669"/>
    <property type="project" value="UniProtKB-KW"/>
</dbReference>
<proteinExistence type="inferred from homology"/>
<organism>
    <name type="scientific">Equine herpesvirus 2 (strain 86/87)</name>
    <name type="common">EHV-2</name>
    <dbReference type="NCBI Taxonomy" id="82831"/>
    <lineage>
        <taxon>Viruses</taxon>
        <taxon>Duplodnaviria</taxon>
        <taxon>Heunggongvirae</taxon>
        <taxon>Peploviricota</taxon>
        <taxon>Herviviricetes</taxon>
        <taxon>Herpesvirales</taxon>
        <taxon>Orthoherpesviridae</taxon>
        <taxon>Gammaherpesvirinae</taxon>
        <taxon>Percavirus</taxon>
        <taxon>Percavirus equidgamma2</taxon>
        <taxon>Equid gammaherpesvirus 2</taxon>
    </lineage>
</organism>
<reference key="1">
    <citation type="journal article" date="1995" name="J. Mol. Biol.">
        <title>The DNA sequence of equine herpesvirus 2.</title>
        <authorList>
            <person name="Telford E.A.R."/>
            <person name="Watson M.S."/>
            <person name="Aird H.C."/>
            <person name="Perry J."/>
            <person name="Davison A.J."/>
        </authorList>
    </citation>
    <scope>NUCLEOTIDE SEQUENCE [LARGE SCALE GENOMIC DNA]</scope>
</reference>
<comment type="subcellular location">
    <subcellularLocation>
        <location evidence="3">Host membrane</location>
        <topology evidence="3">Single-pass membrane protein</topology>
    </subcellularLocation>
</comment>
<gene>
    <name type="primary">E9</name>
</gene>
<evidence type="ECO:0000255" key="1"/>
<evidence type="ECO:0000256" key="2">
    <source>
        <dbReference type="SAM" id="MobiDB-lite"/>
    </source>
</evidence>
<evidence type="ECO:0000305" key="3"/>
<organismHost>
    <name type="scientific">Equus caballus</name>
    <name type="common">Horse</name>
    <dbReference type="NCBI Taxonomy" id="9796"/>
</organismHost>
<protein>
    <recommendedName>
        <fullName>Uncharacterized gene E9 protein</fullName>
    </recommendedName>
</protein>
<feature type="signal peptide" evidence="1">
    <location>
        <begin position="1"/>
        <end position="19"/>
    </location>
</feature>
<feature type="chain" id="PRO_0000406020" description="Uncharacterized gene E9 protein">
    <location>
        <begin position="20"/>
        <end position="205"/>
    </location>
</feature>
<feature type="transmembrane region" description="Helical" evidence="1">
    <location>
        <begin position="147"/>
        <end position="167"/>
    </location>
</feature>
<feature type="region of interest" description="Disordered" evidence="2">
    <location>
        <begin position="40"/>
        <end position="135"/>
    </location>
</feature>
<feature type="compositionally biased region" description="Low complexity" evidence="2">
    <location>
        <begin position="40"/>
        <end position="133"/>
    </location>
</feature>
<accession>Q66676</accession>
<name>VGE9_EHV2</name>
<sequence length="205" mass="20806">MKTLCVLSIFLALLGGLCTSSTTSTTATSNGTTSTLNTTVSSVASTSTPSTESTTTTTPTTTNSSASSTSVTVASTATTSPQTNSTTSLTSPLSSTFSSTSANVSSSTTTTTSSTTKSTSSTKPKTSKNNPKTQEAGAEAAVMISLGILYLFILLLIIFVIILICFIRRRQHHQHGGGGGGQGGPMIPLDVISLESGLGESWSSE</sequence>
<keyword id="KW-1043">Host membrane</keyword>
<keyword id="KW-0472">Membrane</keyword>
<keyword id="KW-1185">Reference proteome</keyword>
<keyword id="KW-0732">Signal</keyword>
<keyword id="KW-0812">Transmembrane</keyword>
<keyword id="KW-1133">Transmembrane helix</keyword>